<evidence type="ECO:0000255" key="1">
    <source>
        <dbReference type="PROSITE-ProRule" id="PRU01330"/>
    </source>
</evidence>
<evidence type="ECO:0000255" key="2">
    <source>
        <dbReference type="PROSITE-ProRule" id="PRU01331"/>
    </source>
</evidence>
<evidence type="ECO:0000305" key="3"/>
<sequence>MSSLSDLINFNLSDSTEKIIAEYIWVGGSGIDIRSKARTLPGPVSDPAKLPKWNYDGSSTDQAPGKDSEVILYPQAIFKDPFRRGNNILVICDVYTPAGEPLPTNKRYNAAKIFSHPDVAAEVPWYGIEQEYTLLQKDINWPLGWPIGGYPGKQGPYYCGIGADKAYGRDIVDAHYKACLFAGINISGINGEVMPGQWEFQVGPSVGISAGDEIWAARYILERITEISGVVVSFDPKPIPGDWNGAGAHANFSTKSMRENGGYEVIKKAIEKLGLRHKEHIAAYGEGNERRLTGKHETADINVFSWGVANRGSSIRVGRDTEKDGKGYFEDRRPASNMDPYVVTSMIAETTILWKKS</sequence>
<keyword id="KW-0067">ATP-binding</keyword>
<keyword id="KW-0963">Cytoplasm</keyword>
<keyword id="KW-0436">Ligase</keyword>
<keyword id="KW-0535">Nitrogen fixation</keyword>
<keyword id="KW-0547">Nucleotide-binding</keyword>
<comment type="catalytic activity">
    <reaction>
        <text>L-glutamate + NH4(+) + ATP = L-glutamine + ADP + phosphate + H(+)</text>
        <dbReference type="Rhea" id="RHEA:16169"/>
        <dbReference type="ChEBI" id="CHEBI:15378"/>
        <dbReference type="ChEBI" id="CHEBI:28938"/>
        <dbReference type="ChEBI" id="CHEBI:29985"/>
        <dbReference type="ChEBI" id="CHEBI:30616"/>
        <dbReference type="ChEBI" id="CHEBI:43474"/>
        <dbReference type="ChEBI" id="CHEBI:58359"/>
        <dbReference type="ChEBI" id="CHEBI:456216"/>
        <dbReference type="EC" id="6.3.1.2"/>
    </reaction>
</comment>
<comment type="subunit">
    <text>Homooctamer.</text>
</comment>
<comment type="subcellular location">
    <subcellularLocation>
        <location>Cytoplasm</location>
    </subcellularLocation>
</comment>
<comment type="miscellaneous">
    <text>In pea there are distinct isozymes in leaves, roots and nodules.</text>
</comment>
<comment type="miscellaneous">
    <text>Irreversibly inhibited by the herbicide L-phosphinothricin (PPT).</text>
</comment>
<comment type="similarity">
    <text evidence="3">Belongs to the glutamine synthetase family.</text>
</comment>
<dbReference type="EC" id="6.3.1.2"/>
<dbReference type="EMBL" id="U28925">
    <property type="protein sequence ID" value="AAB03493.1"/>
    <property type="molecule type" value="Genomic_DNA"/>
</dbReference>
<dbReference type="PIR" id="S62712">
    <property type="entry name" value="S62712"/>
</dbReference>
<dbReference type="SMR" id="Q43066"/>
<dbReference type="OrthoDB" id="1936100at2759"/>
<dbReference type="GO" id="GO:0005737">
    <property type="term" value="C:cytoplasm"/>
    <property type="evidence" value="ECO:0007669"/>
    <property type="project" value="UniProtKB-SubCell"/>
</dbReference>
<dbReference type="GO" id="GO:0005524">
    <property type="term" value="F:ATP binding"/>
    <property type="evidence" value="ECO:0007669"/>
    <property type="project" value="UniProtKB-KW"/>
</dbReference>
<dbReference type="GO" id="GO:0004356">
    <property type="term" value="F:glutamine synthetase activity"/>
    <property type="evidence" value="ECO:0007669"/>
    <property type="project" value="UniProtKB-EC"/>
</dbReference>
<dbReference type="GO" id="GO:0006542">
    <property type="term" value="P:glutamine biosynthetic process"/>
    <property type="evidence" value="ECO:0007669"/>
    <property type="project" value="InterPro"/>
</dbReference>
<dbReference type="FunFam" id="3.30.590.10:FF:000004">
    <property type="entry name" value="Glutamine synthetase"/>
    <property type="match status" value="1"/>
</dbReference>
<dbReference type="FunFam" id="3.10.20.70:FF:000003">
    <property type="entry name" value="Glutamine synthetase, chloroplastic"/>
    <property type="match status" value="1"/>
</dbReference>
<dbReference type="Gene3D" id="3.10.20.70">
    <property type="entry name" value="Glutamine synthetase, N-terminal domain"/>
    <property type="match status" value="1"/>
</dbReference>
<dbReference type="Gene3D" id="3.30.590.10">
    <property type="entry name" value="Glutamine synthetase/guanido kinase, catalytic domain"/>
    <property type="match status" value="1"/>
</dbReference>
<dbReference type="InterPro" id="IPR008147">
    <property type="entry name" value="Gln_synt_N"/>
</dbReference>
<dbReference type="InterPro" id="IPR036651">
    <property type="entry name" value="Gln_synt_N_sf"/>
</dbReference>
<dbReference type="InterPro" id="IPR014746">
    <property type="entry name" value="Gln_synth/guanido_kin_cat_dom"/>
</dbReference>
<dbReference type="InterPro" id="IPR008146">
    <property type="entry name" value="Gln_synth_cat_dom"/>
</dbReference>
<dbReference type="InterPro" id="IPR027303">
    <property type="entry name" value="Gln_synth_gly_rich_site"/>
</dbReference>
<dbReference type="InterPro" id="IPR027302">
    <property type="entry name" value="Gln_synth_N_conserv_site"/>
</dbReference>
<dbReference type="InterPro" id="IPR050292">
    <property type="entry name" value="Glutamine_Synthetase"/>
</dbReference>
<dbReference type="PANTHER" id="PTHR20852">
    <property type="entry name" value="GLUTAMINE SYNTHETASE"/>
    <property type="match status" value="1"/>
</dbReference>
<dbReference type="PANTHER" id="PTHR20852:SF110">
    <property type="entry name" value="GLUTAMINE SYNTHETASE"/>
    <property type="match status" value="1"/>
</dbReference>
<dbReference type="Pfam" id="PF00120">
    <property type="entry name" value="Gln-synt_C"/>
    <property type="match status" value="1"/>
</dbReference>
<dbReference type="Pfam" id="PF03951">
    <property type="entry name" value="Gln-synt_N"/>
    <property type="match status" value="1"/>
</dbReference>
<dbReference type="SMART" id="SM01230">
    <property type="entry name" value="Gln-synt_C"/>
    <property type="match status" value="1"/>
</dbReference>
<dbReference type="SUPFAM" id="SSF54368">
    <property type="entry name" value="Glutamine synthetase, N-terminal domain"/>
    <property type="match status" value="1"/>
</dbReference>
<dbReference type="SUPFAM" id="SSF55931">
    <property type="entry name" value="Glutamine synthetase/guanido kinase"/>
    <property type="match status" value="1"/>
</dbReference>
<dbReference type="PROSITE" id="PS00180">
    <property type="entry name" value="GLNA_1"/>
    <property type="match status" value="1"/>
</dbReference>
<dbReference type="PROSITE" id="PS00181">
    <property type="entry name" value="GLNA_ATP"/>
    <property type="match status" value="1"/>
</dbReference>
<dbReference type="PROSITE" id="PS51986">
    <property type="entry name" value="GS_BETA_GRASP"/>
    <property type="match status" value="1"/>
</dbReference>
<dbReference type="PROSITE" id="PS51987">
    <property type="entry name" value="GS_CATALYTIC"/>
    <property type="match status" value="1"/>
</dbReference>
<organism>
    <name type="scientific">Pisum sativum</name>
    <name type="common">Garden pea</name>
    <name type="synonym">Lathyrus oleraceus</name>
    <dbReference type="NCBI Taxonomy" id="3888"/>
    <lineage>
        <taxon>Eukaryota</taxon>
        <taxon>Viridiplantae</taxon>
        <taxon>Streptophyta</taxon>
        <taxon>Embryophyta</taxon>
        <taxon>Tracheophyta</taxon>
        <taxon>Spermatophyta</taxon>
        <taxon>Magnoliopsida</taxon>
        <taxon>eudicotyledons</taxon>
        <taxon>Gunneridae</taxon>
        <taxon>Pentapetalae</taxon>
        <taxon>rosids</taxon>
        <taxon>fabids</taxon>
        <taxon>Fabales</taxon>
        <taxon>Fabaceae</taxon>
        <taxon>Papilionoideae</taxon>
        <taxon>50 kb inversion clade</taxon>
        <taxon>NPAAA clade</taxon>
        <taxon>Hologalegina</taxon>
        <taxon>IRL clade</taxon>
        <taxon>Fabeae</taxon>
        <taxon>Pisum</taxon>
    </lineage>
</organism>
<proteinExistence type="inferred from homology"/>
<name>GLNA4_PEA</name>
<protein>
    <recommendedName>
        <fullName>Glutamine synthetase root isozyme B</fullName>
        <ecNumber>6.3.1.2</ecNumber>
    </recommendedName>
    <alternativeName>
        <fullName>Cytosolic GS3 B</fullName>
    </alternativeName>
    <alternativeName>
        <fullName>Glutamate--ammonia ligase</fullName>
    </alternativeName>
</protein>
<gene>
    <name type="primary">GS3B</name>
</gene>
<reference key="1">
    <citation type="journal article" date="1995" name="Plant Mol. Biol.">
        <title>Molecular evolution of duplicate copies of genes encoding cytosolic glutamine synthetase in Pisum sativum.</title>
        <authorList>
            <person name="Walker E.L."/>
            <person name="Weeden N.F."/>
            <person name="Taylor C.B."/>
            <person name="Green P."/>
            <person name="Coruzzi G.M."/>
        </authorList>
    </citation>
    <scope>NUCLEOTIDE SEQUENCE [GENOMIC DNA]</scope>
    <source>
        <strain>cv. Feltham First</strain>
    </source>
</reference>
<accession>Q43066</accession>
<feature type="chain" id="PRO_0000153190" description="Glutamine synthetase root isozyme B">
    <location>
        <begin position="1"/>
        <end position="357"/>
    </location>
</feature>
<feature type="domain" description="GS beta-grasp" evidence="1">
    <location>
        <begin position="19"/>
        <end position="99"/>
    </location>
</feature>
<feature type="domain" description="GS catalytic" evidence="2">
    <location>
        <begin position="106"/>
        <end position="357"/>
    </location>
</feature>